<organism>
    <name type="scientific">Clostridium botulinum (strain ATCC 19397 / Type A)</name>
    <dbReference type="NCBI Taxonomy" id="441770"/>
    <lineage>
        <taxon>Bacteria</taxon>
        <taxon>Bacillati</taxon>
        <taxon>Bacillota</taxon>
        <taxon>Clostridia</taxon>
        <taxon>Eubacteriales</taxon>
        <taxon>Clostridiaceae</taxon>
        <taxon>Clostridium</taxon>
    </lineage>
</organism>
<proteinExistence type="inferred from homology"/>
<dbReference type="EMBL" id="CP000726">
    <property type="protein sequence ID" value="ABS34409.1"/>
    <property type="molecule type" value="Genomic_DNA"/>
</dbReference>
<dbReference type="RefSeq" id="WP_011986848.1">
    <property type="nucleotide sequence ID" value="NC_009697.1"/>
</dbReference>
<dbReference type="SMR" id="A7FW89"/>
<dbReference type="GeneID" id="5186774"/>
<dbReference type="KEGG" id="cba:CLB_2396"/>
<dbReference type="HOGENOM" id="CLU_016077_6_2_9"/>
<dbReference type="GO" id="GO:0016887">
    <property type="term" value="F:ATP hydrolysis activity"/>
    <property type="evidence" value="ECO:0007669"/>
    <property type="project" value="InterPro"/>
</dbReference>
<dbReference type="GO" id="GO:0005525">
    <property type="term" value="F:GTP binding"/>
    <property type="evidence" value="ECO:0007669"/>
    <property type="project" value="UniProtKB-UniRule"/>
</dbReference>
<dbReference type="GO" id="GO:0043022">
    <property type="term" value="F:ribosome binding"/>
    <property type="evidence" value="ECO:0007669"/>
    <property type="project" value="TreeGrafter"/>
</dbReference>
<dbReference type="GO" id="GO:0042254">
    <property type="term" value="P:ribosome biogenesis"/>
    <property type="evidence" value="ECO:0007669"/>
    <property type="project" value="UniProtKB-KW"/>
</dbReference>
<dbReference type="CDD" id="cd01894">
    <property type="entry name" value="EngA1"/>
    <property type="match status" value="1"/>
</dbReference>
<dbReference type="CDD" id="cd01895">
    <property type="entry name" value="EngA2"/>
    <property type="match status" value="1"/>
</dbReference>
<dbReference type="FunFam" id="3.30.300.20:FF:000004">
    <property type="entry name" value="GTPase Der"/>
    <property type="match status" value="1"/>
</dbReference>
<dbReference type="FunFam" id="3.40.50.300:FF:000040">
    <property type="entry name" value="GTPase Der"/>
    <property type="match status" value="1"/>
</dbReference>
<dbReference type="FunFam" id="3.40.50.300:FF:000057">
    <property type="entry name" value="GTPase Der"/>
    <property type="match status" value="1"/>
</dbReference>
<dbReference type="Gene3D" id="3.30.300.20">
    <property type="match status" value="1"/>
</dbReference>
<dbReference type="Gene3D" id="3.40.50.300">
    <property type="entry name" value="P-loop containing nucleotide triphosphate hydrolases"/>
    <property type="match status" value="2"/>
</dbReference>
<dbReference type="HAMAP" id="MF_00195">
    <property type="entry name" value="GTPase_Der"/>
    <property type="match status" value="1"/>
</dbReference>
<dbReference type="InterPro" id="IPR003593">
    <property type="entry name" value="AAA+_ATPase"/>
</dbReference>
<dbReference type="InterPro" id="IPR031166">
    <property type="entry name" value="G_ENGA"/>
</dbReference>
<dbReference type="InterPro" id="IPR006073">
    <property type="entry name" value="GTP-bd"/>
</dbReference>
<dbReference type="InterPro" id="IPR016484">
    <property type="entry name" value="GTPase_Der"/>
</dbReference>
<dbReference type="InterPro" id="IPR032859">
    <property type="entry name" value="KH_dom-like"/>
</dbReference>
<dbReference type="InterPro" id="IPR015946">
    <property type="entry name" value="KH_dom-like_a/b"/>
</dbReference>
<dbReference type="InterPro" id="IPR027417">
    <property type="entry name" value="P-loop_NTPase"/>
</dbReference>
<dbReference type="InterPro" id="IPR005225">
    <property type="entry name" value="Small_GTP-bd"/>
</dbReference>
<dbReference type="NCBIfam" id="TIGR03594">
    <property type="entry name" value="GTPase_EngA"/>
    <property type="match status" value="1"/>
</dbReference>
<dbReference type="NCBIfam" id="TIGR00231">
    <property type="entry name" value="small_GTP"/>
    <property type="match status" value="2"/>
</dbReference>
<dbReference type="PANTHER" id="PTHR43834">
    <property type="entry name" value="GTPASE DER"/>
    <property type="match status" value="1"/>
</dbReference>
<dbReference type="PANTHER" id="PTHR43834:SF6">
    <property type="entry name" value="GTPASE DER"/>
    <property type="match status" value="1"/>
</dbReference>
<dbReference type="Pfam" id="PF14714">
    <property type="entry name" value="KH_dom-like"/>
    <property type="match status" value="1"/>
</dbReference>
<dbReference type="Pfam" id="PF01926">
    <property type="entry name" value="MMR_HSR1"/>
    <property type="match status" value="2"/>
</dbReference>
<dbReference type="PIRSF" id="PIRSF006485">
    <property type="entry name" value="GTP-binding_EngA"/>
    <property type="match status" value="1"/>
</dbReference>
<dbReference type="PRINTS" id="PR00326">
    <property type="entry name" value="GTP1OBG"/>
</dbReference>
<dbReference type="SMART" id="SM00382">
    <property type="entry name" value="AAA"/>
    <property type="match status" value="2"/>
</dbReference>
<dbReference type="SUPFAM" id="SSF52540">
    <property type="entry name" value="P-loop containing nucleoside triphosphate hydrolases"/>
    <property type="match status" value="2"/>
</dbReference>
<dbReference type="PROSITE" id="PS51712">
    <property type="entry name" value="G_ENGA"/>
    <property type="match status" value="2"/>
</dbReference>
<feature type="chain" id="PRO_1000011605" description="GTPase Der">
    <location>
        <begin position="1"/>
        <end position="439"/>
    </location>
</feature>
<feature type="domain" description="EngA-type G 1">
    <location>
        <begin position="4"/>
        <end position="168"/>
    </location>
</feature>
<feature type="domain" description="EngA-type G 2">
    <location>
        <begin position="177"/>
        <end position="352"/>
    </location>
</feature>
<feature type="domain" description="KH-like" evidence="1">
    <location>
        <begin position="353"/>
        <end position="437"/>
    </location>
</feature>
<feature type="binding site" evidence="1">
    <location>
        <begin position="10"/>
        <end position="17"/>
    </location>
    <ligand>
        <name>GTP</name>
        <dbReference type="ChEBI" id="CHEBI:37565"/>
        <label>1</label>
    </ligand>
</feature>
<feature type="binding site" evidence="1">
    <location>
        <begin position="57"/>
        <end position="61"/>
    </location>
    <ligand>
        <name>GTP</name>
        <dbReference type="ChEBI" id="CHEBI:37565"/>
        <label>1</label>
    </ligand>
</feature>
<feature type="binding site" evidence="1">
    <location>
        <begin position="120"/>
        <end position="123"/>
    </location>
    <ligand>
        <name>GTP</name>
        <dbReference type="ChEBI" id="CHEBI:37565"/>
        <label>1</label>
    </ligand>
</feature>
<feature type="binding site" evidence="1">
    <location>
        <begin position="183"/>
        <end position="190"/>
    </location>
    <ligand>
        <name>GTP</name>
        <dbReference type="ChEBI" id="CHEBI:37565"/>
        <label>2</label>
    </ligand>
</feature>
<feature type="binding site" evidence="1">
    <location>
        <begin position="230"/>
        <end position="234"/>
    </location>
    <ligand>
        <name>GTP</name>
        <dbReference type="ChEBI" id="CHEBI:37565"/>
        <label>2</label>
    </ligand>
</feature>
<feature type="binding site" evidence="1">
    <location>
        <begin position="295"/>
        <end position="298"/>
    </location>
    <ligand>
        <name>GTP</name>
        <dbReference type="ChEBI" id="CHEBI:37565"/>
        <label>2</label>
    </ligand>
</feature>
<accession>A7FW89</accession>
<protein>
    <recommendedName>
        <fullName evidence="1">GTPase Der</fullName>
    </recommendedName>
    <alternativeName>
        <fullName evidence="1">GTP-binding protein EngA</fullName>
    </alternativeName>
</protein>
<comment type="function">
    <text evidence="1">GTPase that plays an essential role in the late steps of ribosome biogenesis.</text>
</comment>
<comment type="subunit">
    <text evidence="1">Associates with the 50S ribosomal subunit.</text>
</comment>
<comment type="similarity">
    <text evidence="1">Belongs to the TRAFAC class TrmE-Era-EngA-EngB-Septin-like GTPase superfamily. EngA (Der) GTPase family.</text>
</comment>
<gene>
    <name evidence="1" type="primary">der</name>
    <name type="synonym">engA</name>
    <name type="ordered locus">CLB_2396</name>
</gene>
<evidence type="ECO:0000255" key="1">
    <source>
        <dbReference type="HAMAP-Rule" id="MF_00195"/>
    </source>
</evidence>
<name>DER_CLOB1</name>
<keyword id="KW-0342">GTP-binding</keyword>
<keyword id="KW-0547">Nucleotide-binding</keyword>
<keyword id="KW-0677">Repeat</keyword>
<keyword id="KW-0690">Ribosome biogenesis</keyword>
<reference key="1">
    <citation type="journal article" date="2007" name="PLoS ONE">
        <title>Analysis of the neurotoxin complex genes in Clostridium botulinum A1-A4 and B1 strains: BoNT/A3, /Ba4 and /B1 clusters are located within plasmids.</title>
        <authorList>
            <person name="Smith T.J."/>
            <person name="Hill K.K."/>
            <person name="Foley B.T."/>
            <person name="Detter J.C."/>
            <person name="Munk A.C."/>
            <person name="Bruce D.C."/>
            <person name="Doggett N.A."/>
            <person name="Smith L.A."/>
            <person name="Marks J.D."/>
            <person name="Xie G."/>
            <person name="Brettin T.S."/>
        </authorList>
    </citation>
    <scope>NUCLEOTIDE SEQUENCE [LARGE SCALE GENOMIC DNA]</scope>
    <source>
        <strain>ATCC 19397 / Type A</strain>
    </source>
</reference>
<sequence>MAKPIVAIVGRPNVGKSTLFNKLAGKRISIVQDTPGVTRDRIYAEAEWLNYKFTMIDTGGIEPKSEDIIVSQMRRQAQIAIEMANVIIFLVDGKEGLAPADKEVAQMLRKSKKPVVLVVNKIDKLKDENNAYEFYNLGIGDPVTISSSQALGLGDMLDRVVEYFKDDESAGEDDERINIAFIGKPNVGKSSLINKLLGEERLIVSDIPGTTRDSIDSYVDTDFGEFTLIDTAGLRRKSKVKEEIERYSVIRTYASIERADVCILMIDATEGISEQDQKIIGYAHDINKAILVIVNKWDLVEKDDKTMDKFKKELKVNLSFMPYAKYLFISAKTGQRVVKVLQTAKECYDNYNKRVKTGVLNDVISQAIMMKEPPIVGTKRLKIYYVTQIGTKPPTFIFFVNDPACIHFSYQRYLENQLRENFDFQGTGIKSEFRERKEK</sequence>